<protein>
    <recommendedName>
        <fullName evidence="1">DNA-directed RNA polymerase subunit omega</fullName>
        <shortName evidence="1">RNAP omega subunit</shortName>
        <ecNumber evidence="1">2.7.7.6</ecNumber>
    </recommendedName>
    <alternativeName>
        <fullName evidence="1">RNA polymerase omega subunit</fullName>
    </alternativeName>
    <alternativeName>
        <fullName evidence="1">Transcriptase subunit omega</fullName>
    </alternativeName>
</protein>
<sequence length="78" mass="8963">MNISNNARIDSNDLAKRGESLIRKSTNRYLTTVKIAFRAKQRRFDDFDGLLEESNIKPVQRSIIELSDEQDQPDLLPG</sequence>
<evidence type="ECO:0000255" key="1">
    <source>
        <dbReference type="HAMAP-Rule" id="MF_00366"/>
    </source>
</evidence>
<dbReference type="EC" id="2.7.7.6" evidence="1"/>
<dbReference type="EMBL" id="CP000551">
    <property type="protein sequence ID" value="ABM70916.1"/>
    <property type="molecule type" value="Genomic_DNA"/>
</dbReference>
<dbReference type="RefSeq" id="WP_011819046.1">
    <property type="nucleotide sequence ID" value="NC_008816.1"/>
</dbReference>
<dbReference type="SMR" id="A2BT05"/>
<dbReference type="STRING" id="146891.A9601_16331"/>
<dbReference type="KEGG" id="pmb:A9601_16331"/>
<dbReference type="eggNOG" id="ENOG5032RMS">
    <property type="taxonomic scope" value="Bacteria"/>
</dbReference>
<dbReference type="HOGENOM" id="CLU_175526_0_0_3"/>
<dbReference type="OrthoDB" id="463386at2"/>
<dbReference type="Proteomes" id="UP000002590">
    <property type="component" value="Chromosome"/>
</dbReference>
<dbReference type="GO" id="GO:0000428">
    <property type="term" value="C:DNA-directed RNA polymerase complex"/>
    <property type="evidence" value="ECO:0007669"/>
    <property type="project" value="UniProtKB-KW"/>
</dbReference>
<dbReference type="GO" id="GO:0003677">
    <property type="term" value="F:DNA binding"/>
    <property type="evidence" value="ECO:0007669"/>
    <property type="project" value="UniProtKB-UniRule"/>
</dbReference>
<dbReference type="GO" id="GO:0003899">
    <property type="term" value="F:DNA-directed RNA polymerase activity"/>
    <property type="evidence" value="ECO:0007669"/>
    <property type="project" value="UniProtKB-UniRule"/>
</dbReference>
<dbReference type="GO" id="GO:0006351">
    <property type="term" value="P:DNA-templated transcription"/>
    <property type="evidence" value="ECO:0007669"/>
    <property type="project" value="UniProtKB-UniRule"/>
</dbReference>
<dbReference type="HAMAP" id="MF_00366">
    <property type="entry name" value="RNApol_bact_RpoZ"/>
    <property type="match status" value="1"/>
</dbReference>
<dbReference type="InterPro" id="IPR003716">
    <property type="entry name" value="DNA-dir_RNA_pol_omega"/>
</dbReference>
<dbReference type="InterPro" id="IPR006110">
    <property type="entry name" value="Pol_omega/Rpo6/RPB6"/>
</dbReference>
<dbReference type="NCBIfam" id="NF001574">
    <property type="entry name" value="PRK00392.2-5"/>
    <property type="match status" value="1"/>
</dbReference>
<dbReference type="Pfam" id="PF01192">
    <property type="entry name" value="RNA_pol_Rpb6"/>
    <property type="match status" value="1"/>
</dbReference>
<gene>
    <name evidence="1" type="primary">rpoZ</name>
    <name type="ordered locus">A9601_16331</name>
</gene>
<proteinExistence type="inferred from homology"/>
<name>RPOZ_PROMS</name>
<reference key="1">
    <citation type="journal article" date="2007" name="PLoS Genet.">
        <title>Patterns and implications of gene gain and loss in the evolution of Prochlorococcus.</title>
        <authorList>
            <person name="Kettler G.C."/>
            <person name="Martiny A.C."/>
            <person name="Huang K."/>
            <person name="Zucker J."/>
            <person name="Coleman M.L."/>
            <person name="Rodrigue S."/>
            <person name="Chen F."/>
            <person name="Lapidus A."/>
            <person name="Ferriera S."/>
            <person name="Johnson J."/>
            <person name="Steglich C."/>
            <person name="Church G.M."/>
            <person name="Richardson P."/>
            <person name="Chisholm S.W."/>
        </authorList>
    </citation>
    <scope>NUCLEOTIDE SEQUENCE [LARGE SCALE GENOMIC DNA]</scope>
    <source>
        <strain>AS9601</strain>
    </source>
</reference>
<keyword id="KW-0240">DNA-directed RNA polymerase</keyword>
<keyword id="KW-0548">Nucleotidyltransferase</keyword>
<keyword id="KW-0804">Transcription</keyword>
<keyword id="KW-0808">Transferase</keyword>
<feature type="chain" id="PRO_1000005976" description="DNA-directed RNA polymerase subunit omega">
    <location>
        <begin position="1"/>
        <end position="78"/>
    </location>
</feature>
<accession>A2BT05</accession>
<organism>
    <name type="scientific">Prochlorococcus marinus (strain AS9601)</name>
    <dbReference type="NCBI Taxonomy" id="146891"/>
    <lineage>
        <taxon>Bacteria</taxon>
        <taxon>Bacillati</taxon>
        <taxon>Cyanobacteriota</taxon>
        <taxon>Cyanophyceae</taxon>
        <taxon>Synechococcales</taxon>
        <taxon>Prochlorococcaceae</taxon>
        <taxon>Prochlorococcus</taxon>
    </lineage>
</organism>
<comment type="function">
    <text evidence="1">Promotes RNA polymerase assembly. Latches the N- and C-terminal regions of the beta' subunit thereby facilitating its interaction with the beta and alpha subunits.</text>
</comment>
<comment type="catalytic activity">
    <reaction evidence="1">
        <text>RNA(n) + a ribonucleoside 5'-triphosphate = RNA(n+1) + diphosphate</text>
        <dbReference type="Rhea" id="RHEA:21248"/>
        <dbReference type="Rhea" id="RHEA-COMP:14527"/>
        <dbReference type="Rhea" id="RHEA-COMP:17342"/>
        <dbReference type="ChEBI" id="CHEBI:33019"/>
        <dbReference type="ChEBI" id="CHEBI:61557"/>
        <dbReference type="ChEBI" id="CHEBI:140395"/>
        <dbReference type="EC" id="2.7.7.6"/>
    </reaction>
</comment>
<comment type="subunit">
    <text evidence="1">In cyanobacteria the RNAP catalytic core is composed of 2 alpha, 1 beta, 1 beta', 1 gamma and 1 omega subunit. When a sigma factor is associated with the core the holoenzyme is formed, which can initiate transcription.</text>
</comment>
<comment type="similarity">
    <text evidence="1">Belongs to the RNA polymerase subunit omega family.</text>
</comment>